<organism>
    <name type="scientific">Shewanella baltica (strain OS195)</name>
    <dbReference type="NCBI Taxonomy" id="399599"/>
    <lineage>
        <taxon>Bacteria</taxon>
        <taxon>Pseudomonadati</taxon>
        <taxon>Pseudomonadota</taxon>
        <taxon>Gammaproteobacteria</taxon>
        <taxon>Alteromonadales</taxon>
        <taxon>Shewanellaceae</taxon>
        <taxon>Shewanella</taxon>
    </lineage>
</organism>
<keyword id="KW-0963">Cytoplasm</keyword>
<keyword id="KW-0227">DNA damage</keyword>
<keyword id="KW-0228">DNA excision</keyword>
<keyword id="KW-0234">DNA repair</keyword>
<keyword id="KW-0267">Excision nuclease</keyword>
<keyword id="KW-0742">SOS response</keyword>
<reference key="1">
    <citation type="submission" date="2007-11" db="EMBL/GenBank/DDBJ databases">
        <title>Complete sequence of chromosome of Shewanella baltica OS195.</title>
        <authorList>
            <consortium name="US DOE Joint Genome Institute"/>
            <person name="Copeland A."/>
            <person name="Lucas S."/>
            <person name="Lapidus A."/>
            <person name="Barry K."/>
            <person name="Glavina del Rio T."/>
            <person name="Dalin E."/>
            <person name="Tice H."/>
            <person name="Pitluck S."/>
            <person name="Chain P."/>
            <person name="Malfatti S."/>
            <person name="Shin M."/>
            <person name="Vergez L."/>
            <person name="Schmutz J."/>
            <person name="Larimer F."/>
            <person name="Land M."/>
            <person name="Hauser L."/>
            <person name="Kyrpides N."/>
            <person name="Kim E."/>
            <person name="Brettar I."/>
            <person name="Rodrigues J."/>
            <person name="Konstantinidis K."/>
            <person name="Klappenbach J."/>
            <person name="Hofle M."/>
            <person name="Tiedje J."/>
            <person name="Richardson P."/>
        </authorList>
    </citation>
    <scope>NUCLEOTIDE SEQUENCE [LARGE SCALE GENOMIC DNA]</scope>
    <source>
        <strain>OS195</strain>
    </source>
</reference>
<accession>A9L582</accession>
<dbReference type="EMBL" id="CP000891">
    <property type="protein sequence ID" value="ABX49844.1"/>
    <property type="molecule type" value="Genomic_DNA"/>
</dbReference>
<dbReference type="RefSeq" id="WP_012197278.1">
    <property type="nucleotide sequence ID" value="NC_009997.1"/>
</dbReference>
<dbReference type="SMR" id="A9L582"/>
<dbReference type="GeneID" id="11772766"/>
<dbReference type="KEGG" id="sbn:Sbal195_2676"/>
<dbReference type="HOGENOM" id="CLU_014841_3_0_6"/>
<dbReference type="Proteomes" id="UP000000770">
    <property type="component" value="Chromosome"/>
</dbReference>
<dbReference type="GO" id="GO:0005737">
    <property type="term" value="C:cytoplasm"/>
    <property type="evidence" value="ECO:0007669"/>
    <property type="project" value="UniProtKB-SubCell"/>
</dbReference>
<dbReference type="GO" id="GO:0009380">
    <property type="term" value="C:excinuclease repair complex"/>
    <property type="evidence" value="ECO:0007669"/>
    <property type="project" value="InterPro"/>
</dbReference>
<dbReference type="GO" id="GO:0003677">
    <property type="term" value="F:DNA binding"/>
    <property type="evidence" value="ECO:0007669"/>
    <property type="project" value="UniProtKB-UniRule"/>
</dbReference>
<dbReference type="GO" id="GO:0009381">
    <property type="term" value="F:excinuclease ABC activity"/>
    <property type="evidence" value="ECO:0007669"/>
    <property type="project" value="UniProtKB-UniRule"/>
</dbReference>
<dbReference type="GO" id="GO:0006289">
    <property type="term" value="P:nucleotide-excision repair"/>
    <property type="evidence" value="ECO:0007669"/>
    <property type="project" value="UniProtKB-UniRule"/>
</dbReference>
<dbReference type="GO" id="GO:0009432">
    <property type="term" value="P:SOS response"/>
    <property type="evidence" value="ECO:0007669"/>
    <property type="project" value="UniProtKB-UniRule"/>
</dbReference>
<dbReference type="CDD" id="cd10434">
    <property type="entry name" value="GIY-YIG_UvrC_Cho"/>
    <property type="match status" value="1"/>
</dbReference>
<dbReference type="FunFam" id="1.10.150.20:FF:000005">
    <property type="entry name" value="UvrABC system protein C"/>
    <property type="match status" value="1"/>
</dbReference>
<dbReference type="FunFam" id="3.30.420.340:FF:000001">
    <property type="entry name" value="UvrABC system protein C"/>
    <property type="match status" value="1"/>
</dbReference>
<dbReference type="FunFam" id="3.40.1440.10:FF:000001">
    <property type="entry name" value="UvrABC system protein C"/>
    <property type="match status" value="1"/>
</dbReference>
<dbReference type="Gene3D" id="1.10.150.20">
    <property type="entry name" value="5' to 3' exonuclease, C-terminal subdomain"/>
    <property type="match status" value="1"/>
</dbReference>
<dbReference type="Gene3D" id="3.40.1440.10">
    <property type="entry name" value="GIY-YIG endonuclease"/>
    <property type="match status" value="1"/>
</dbReference>
<dbReference type="Gene3D" id="4.10.860.10">
    <property type="entry name" value="UVR domain"/>
    <property type="match status" value="1"/>
</dbReference>
<dbReference type="Gene3D" id="3.30.420.340">
    <property type="entry name" value="UvrC, RNAse H endonuclease domain"/>
    <property type="match status" value="1"/>
</dbReference>
<dbReference type="HAMAP" id="MF_00203">
    <property type="entry name" value="UvrC"/>
    <property type="match status" value="1"/>
</dbReference>
<dbReference type="InterPro" id="IPR000305">
    <property type="entry name" value="GIY-YIG_endonuc"/>
</dbReference>
<dbReference type="InterPro" id="IPR035901">
    <property type="entry name" value="GIY-YIG_endonuc_sf"/>
</dbReference>
<dbReference type="InterPro" id="IPR047296">
    <property type="entry name" value="GIY-YIG_UvrC_Cho"/>
</dbReference>
<dbReference type="InterPro" id="IPR003583">
    <property type="entry name" value="Hlx-hairpin-Hlx_DNA-bd_motif"/>
</dbReference>
<dbReference type="InterPro" id="IPR010994">
    <property type="entry name" value="RuvA_2-like"/>
</dbReference>
<dbReference type="InterPro" id="IPR001943">
    <property type="entry name" value="UVR_dom"/>
</dbReference>
<dbReference type="InterPro" id="IPR036876">
    <property type="entry name" value="UVR_dom_sf"/>
</dbReference>
<dbReference type="InterPro" id="IPR050066">
    <property type="entry name" value="UvrABC_protein_C"/>
</dbReference>
<dbReference type="InterPro" id="IPR004791">
    <property type="entry name" value="UvrC"/>
</dbReference>
<dbReference type="InterPro" id="IPR001162">
    <property type="entry name" value="UvrC_RNase_H_dom"/>
</dbReference>
<dbReference type="InterPro" id="IPR038476">
    <property type="entry name" value="UvrC_RNase_H_dom_sf"/>
</dbReference>
<dbReference type="NCBIfam" id="NF001824">
    <property type="entry name" value="PRK00558.1-5"/>
    <property type="match status" value="1"/>
</dbReference>
<dbReference type="NCBIfam" id="TIGR00194">
    <property type="entry name" value="uvrC"/>
    <property type="match status" value="1"/>
</dbReference>
<dbReference type="PANTHER" id="PTHR30562:SF1">
    <property type="entry name" value="UVRABC SYSTEM PROTEIN C"/>
    <property type="match status" value="1"/>
</dbReference>
<dbReference type="PANTHER" id="PTHR30562">
    <property type="entry name" value="UVRC/OXIDOREDUCTASE"/>
    <property type="match status" value="1"/>
</dbReference>
<dbReference type="Pfam" id="PF01541">
    <property type="entry name" value="GIY-YIG"/>
    <property type="match status" value="1"/>
</dbReference>
<dbReference type="Pfam" id="PF14520">
    <property type="entry name" value="HHH_5"/>
    <property type="match status" value="1"/>
</dbReference>
<dbReference type="Pfam" id="PF02151">
    <property type="entry name" value="UVR"/>
    <property type="match status" value="1"/>
</dbReference>
<dbReference type="Pfam" id="PF22920">
    <property type="entry name" value="UvrC_RNaseH"/>
    <property type="match status" value="1"/>
</dbReference>
<dbReference type="Pfam" id="PF08459">
    <property type="entry name" value="UvrC_RNaseH_dom"/>
    <property type="match status" value="1"/>
</dbReference>
<dbReference type="SMART" id="SM00465">
    <property type="entry name" value="GIYc"/>
    <property type="match status" value="1"/>
</dbReference>
<dbReference type="SMART" id="SM00278">
    <property type="entry name" value="HhH1"/>
    <property type="match status" value="2"/>
</dbReference>
<dbReference type="SUPFAM" id="SSF46600">
    <property type="entry name" value="C-terminal UvrC-binding domain of UvrB"/>
    <property type="match status" value="1"/>
</dbReference>
<dbReference type="SUPFAM" id="SSF82771">
    <property type="entry name" value="GIY-YIG endonuclease"/>
    <property type="match status" value="1"/>
</dbReference>
<dbReference type="SUPFAM" id="SSF47781">
    <property type="entry name" value="RuvA domain 2-like"/>
    <property type="match status" value="1"/>
</dbReference>
<dbReference type="PROSITE" id="PS50164">
    <property type="entry name" value="GIY_YIG"/>
    <property type="match status" value="1"/>
</dbReference>
<dbReference type="PROSITE" id="PS50151">
    <property type="entry name" value="UVR"/>
    <property type="match status" value="1"/>
</dbReference>
<dbReference type="PROSITE" id="PS50165">
    <property type="entry name" value="UVRC"/>
    <property type="match status" value="1"/>
</dbReference>
<sequence>MSNEFNAQSFLRTVSSSAGVYRMYDVKNDVIYVGKAKDLKKRLTSYFRKNLANVKTQALVSHIHHIDVTLTHSETDALLLENDYIKQYMPKYNVLLRDDKSYPYILLSQHEHPRLAYHRGPQREKGHYFGPYPNGGAVRESLHLMQKLFPIRQCDDLYYKSRSRPCLQYQISRCSAPCVGKVSNADYDEQVKLASLFLKGKDQQVISALVDKMELAAERQAYEQAARFRDQIMALRKVAEQQEVSNNKGDMDVIGVHYSSGIACFHLLFIREGKIFGSRSYYPSVPAQTDMDEVLRSFILQFYLNADIQRTIPKEVVISHNFEELHELEAAISEALDKKFSIKTNVRADRASFLRLAVTNATNAVVTRLSHKNTVEQRFVLLEEILELSTPIQRMECFDISHTMGESTVASCVVFNREGPHKGEYRRYNIEGITPGDDYAAMKQAVSRRFDKIEAGGKIPDILFIDGGLGQLRIAQKIVDEKFVHLDKAPQLIGVAKGEGRKPGLETLILGDTETSFSLEGDSPALHLIQHIRDESHRFAITGHRNRRQKTRNTSTLESIPGIGPKRRKALLQHLGGLQEVKGASVAELVKVPGISIEMAQTIHDALRG</sequence>
<proteinExistence type="inferred from homology"/>
<gene>
    <name evidence="1" type="primary">uvrC</name>
    <name type="ordered locus">Sbal195_2676</name>
</gene>
<evidence type="ECO:0000255" key="1">
    <source>
        <dbReference type="HAMAP-Rule" id="MF_00203"/>
    </source>
</evidence>
<feature type="chain" id="PRO_1000077836" description="UvrABC system protein C">
    <location>
        <begin position="1"/>
        <end position="609"/>
    </location>
</feature>
<feature type="domain" description="GIY-YIG" evidence="1">
    <location>
        <begin position="16"/>
        <end position="94"/>
    </location>
</feature>
<feature type="domain" description="UVR" evidence="1">
    <location>
        <begin position="203"/>
        <end position="238"/>
    </location>
</feature>
<name>UVRC_SHEB9</name>
<comment type="function">
    <text evidence="1">The UvrABC repair system catalyzes the recognition and processing of DNA lesions. UvrC both incises the 5' and 3' sides of the lesion. The N-terminal half is responsible for the 3' incision and the C-terminal half is responsible for the 5' incision.</text>
</comment>
<comment type="subunit">
    <text evidence="1">Interacts with UvrB in an incision complex.</text>
</comment>
<comment type="subcellular location">
    <subcellularLocation>
        <location evidence="1">Cytoplasm</location>
    </subcellularLocation>
</comment>
<comment type="similarity">
    <text evidence="1">Belongs to the UvrC family.</text>
</comment>
<protein>
    <recommendedName>
        <fullName evidence="1">UvrABC system protein C</fullName>
        <shortName evidence="1">Protein UvrC</shortName>
    </recommendedName>
    <alternativeName>
        <fullName evidence="1">Excinuclease ABC subunit C</fullName>
    </alternativeName>
</protein>